<evidence type="ECO:0000255" key="1">
    <source>
        <dbReference type="HAMAP-Rule" id="MF_00037"/>
    </source>
</evidence>
<organism>
    <name type="scientific">Phenylobacterium zucineum (strain HLK1)</name>
    <dbReference type="NCBI Taxonomy" id="450851"/>
    <lineage>
        <taxon>Bacteria</taxon>
        <taxon>Pseudomonadati</taxon>
        <taxon>Pseudomonadota</taxon>
        <taxon>Alphaproteobacteria</taxon>
        <taxon>Caulobacterales</taxon>
        <taxon>Caulobacteraceae</taxon>
        <taxon>Phenylobacterium</taxon>
    </lineage>
</organism>
<feature type="chain" id="PRO_1000191438" description="UDP-N-acetylenolpyruvoylglucosamine reductase">
    <location>
        <begin position="1"/>
        <end position="300"/>
    </location>
</feature>
<feature type="domain" description="FAD-binding PCMH-type" evidence="1">
    <location>
        <begin position="27"/>
        <end position="216"/>
    </location>
</feature>
<feature type="active site" evidence="1">
    <location>
        <position position="172"/>
    </location>
</feature>
<feature type="active site" description="Proton donor" evidence="1">
    <location>
        <position position="223"/>
    </location>
</feature>
<feature type="active site" evidence="1">
    <location>
        <position position="293"/>
    </location>
</feature>
<protein>
    <recommendedName>
        <fullName evidence="1">UDP-N-acetylenolpyruvoylglucosamine reductase</fullName>
        <ecNumber evidence="1">1.3.1.98</ecNumber>
    </recommendedName>
    <alternativeName>
        <fullName evidence="1">UDP-N-acetylmuramate dehydrogenase</fullName>
    </alternativeName>
</protein>
<sequence length="300" mass="32008">MTWKDRLPAVRGKLLRDEPLAPFTWFRVGGPADVIFLPEDEDDLAAFLKALPAEVPVTVLGVGSNTLVRDGGVDGVVIRLGKAFAKVEPRGEGRLYAGAAALDAVVAREAGKAGIAGLEFYRGVPGTIGGALVMNAGCYGAETKDVLVEAYALTRAGERLTLSNADLGYSYRKSARAAAEPLIFLGALFEGRPDDPAAIEARMAEITERREKTQPIREKTGGSTFKNPPGHSSWKLVDEAGWRGKLFGGAMFSPLHSNFLINTGEATAADLEGLGEAVRADVKAKFGVDLDWEIKRIGRP</sequence>
<proteinExistence type="inferred from homology"/>
<gene>
    <name evidence="1" type="primary">murB</name>
    <name type="ordered locus">PHZ_c2321</name>
</gene>
<name>MURB_PHEZH</name>
<keyword id="KW-0131">Cell cycle</keyword>
<keyword id="KW-0132">Cell division</keyword>
<keyword id="KW-0133">Cell shape</keyword>
<keyword id="KW-0961">Cell wall biogenesis/degradation</keyword>
<keyword id="KW-0963">Cytoplasm</keyword>
<keyword id="KW-0274">FAD</keyword>
<keyword id="KW-0285">Flavoprotein</keyword>
<keyword id="KW-0521">NADP</keyword>
<keyword id="KW-0560">Oxidoreductase</keyword>
<keyword id="KW-0573">Peptidoglycan synthesis</keyword>
<keyword id="KW-1185">Reference proteome</keyword>
<comment type="function">
    <text evidence="1">Cell wall formation.</text>
</comment>
<comment type="catalytic activity">
    <reaction evidence="1">
        <text>UDP-N-acetyl-alpha-D-muramate + NADP(+) = UDP-N-acetyl-3-O-(1-carboxyvinyl)-alpha-D-glucosamine + NADPH + H(+)</text>
        <dbReference type="Rhea" id="RHEA:12248"/>
        <dbReference type="ChEBI" id="CHEBI:15378"/>
        <dbReference type="ChEBI" id="CHEBI:57783"/>
        <dbReference type="ChEBI" id="CHEBI:58349"/>
        <dbReference type="ChEBI" id="CHEBI:68483"/>
        <dbReference type="ChEBI" id="CHEBI:70757"/>
        <dbReference type="EC" id="1.3.1.98"/>
    </reaction>
</comment>
<comment type="cofactor">
    <cofactor evidence="1">
        <name>FAD</name>
        <dbReference type="ChEBI" id="CHEBI:57692"/>
    </cofactor>
</comment>
<comment type="pathway">
    <text evidence="1">Cell wall biogenesis; peptidoglycan biosynthesis.</text>
</comment>
<comment type="subcellular location">
    <subcellularLocation>
        <location evidence="1">Cytoplasm</location>
    </subcellularLocation>
</comment>
<comment type="similarity">
    <text evidence="1">Belongs to the MurB family.</text>
</comment>
<accession>B4RFG1</accession>
<dbReference type="EC" id="1.3.1.98" evidence="1"/>
<dbReference type="EMBL" id="CP000747">
    <property type="protein sequence ID" value="ACG78731.1"/>
    <property type="molecule type" value="Genomic_DNA"/>
</dbReference>
<dbReference type="RefSeq" id="WP_012522872.1">
    <property type="nucleotide sequence ID" value="NC_011144.1"/>
</dbReference>
<dbReference type="SMR" id="B4RFG1"/>
<dbReference type="STRING" id="450851.PHZ_c2321"/>
<dbReference type="KEGG" id="pzu:PHZ_c2321"/>
<dbReference type="eggNOG" id="COG0812">
    <property type="taxonomic scope" value="Bacteria"/>
</dbReference>
<dbReference type="HOGENOM" id="CLU_035304_1_0_5"/>
<dbReference type="OrthoDB" id="9804753at2"/>
<dbReference type="UniPathway" id="UPA00219"/>
<dbReference type="Proteomes" id="UP000001868">
    <property type="component" value="Chromosome"/>
</dbReference>
<dbReference type="GO" id="GO:0005829">
    <property type="term" value="C:cytosol"/>
    <property type="evidence" value="ECO:0007669"/>
    <property type="project" value="TreeGrafter"/>
</dbReference>
<dbReference type="GO" id="GO:0071949">
    <property type="term" value="F:FAD binding"/>
    <property type="evidence" value="ECO:0007669"/>
    <property type="project" value="InterPro"/>
</dbReference>
<dbReference type="GO" id="GO:0008762">
    <property type="term" value="F:UDP-N-acetylmuramate dehydrogenase activity"/>
    <property type="evidence" value="ECO:0007669"/>
    <property type="project" value="UniProtKB-UniRule"/>
</dbReference>
<dbReference type="GO" id="GO:0051301">
    <property type="term" value="P:cell division"/>
    <property type="evidence" value="ECO:0007669"/>
    <property type="project" value="UniProtKB-KW"/>
</dbReference>
<dbReference type="GO" id="GO:0071555">
    <property type="term" value="P:cell wall organization"/>
    <property type="evidence" value="ECO:0007669"/>
    <property type="project" value="UniProtKB-KW"/>
</dbReference>
<dbReference type="GO" id="GO:0009252">
    <property type="term" value="P:peptidoglycan biosynthetic process"/>
    <property type="evidence" value="ECO:0007669"/>
    <property type="project" value="UniProtKB-UniRule"/>
</dbReference>
<dbReference type="GO" id="GO:0008360">
    <property type="term" value="P:regulation of cell shape"/>
    <property type="evidence" value="ECO:0007669"/>
    <property type="project" value="UniProtKB-KW"/>
</dbReference>
<dbReference type="Gene3D" id="3.30.465.10">
    <property type="match status" value="1"/>
</dbReference>
<dbReference type="Gene3D" id="3.90.78.10">
    <property type="entry name" value="UDP-N-acetylenolpyruvoylglucosamine reductase, C-terminal domain"/>
    <property type="match status" value="1"/>
</dbReference>
<dbReference type="Gene3D" id="3.30.43.10">
    <property type="entry name" value="Uridine Diphospho-n-acetylenolpyruvylglucosamine Reductase, domain 2"/>
    <property type="match status" value="1"/>
</dbReference>
<dbReference type="HAMAP" id="MF_00037">
    <property type="entry name" value="MurB"/>
    <property type="match status" value="1"/>
</dbReference>
<dbReference type="InterPro" id="IPR016166">
    <property type="entry name" value="FAD-bd_PCMH"/>
</dbReference>
<dbReference type="InterPro" id="IPR036318">
    <property type="entry name" value="FAD-bd_PCMH-like_sf"/>
</dbReference>
<dbReference type="InterPro" id="IPR016167">
    <property type="entry name" value="FAD-bd_PCMH_sub1"/>
</dbReference>
<dbReference type="InterPro" id="IPR016169">
    <property type="entry name" value="FAD-bd_PCMH_sub2"/>
</dbReference>
<dbReference type="InterPro" id="IPR003170">
    <property type="entry name" value="MurB"/>
</dbReference>
<dbReference type="InterPro" id="IPR011601">
    <property type="entry name" value="MurB_C"/>
</dbReference>
<dbReference type="InterPro" id="IPR036635">
    <property type="entry name" value="MurB_C_sf"/>
</dbReference>
<dbReference type="InterPro" id="IPR006094">
    <property type="entry name" value="Oxid_FAD_bind_N"/>
</dbReference>
<dbReference type="NCBIfam" id="TIGR00179">
    <property type="entry name" value="murB"/>
    <property type="match status" value="1"/>
</dbReference>
<dbReference type="NCBIfam" id="NF010480">
    <property type="entry name" value="PRK13905.1"/>
    <property type="match status" value="1"/>
</dbReference>
<dbReference type="PANTHER" id="PTHR21071">
    <property type="entry name" value="UDP-N-ACETYLENOLPYRUVOYLGLUCOSAMINE REDUCTASE"/>
    <property type="match status" value="1"/>
</dbReference>
<dbReference type="PANTHER" id="PTHR21071:SF4">
    <property type="entry name" value="UDP-N-ACETYLENOLPYRUVOYLGLUCOSAMINE REDUCTASE"/>
    <property type="match status" value="1"/>
</dbReference>
<dbReference type="Pfam" id="PF01565">
    <property type="entry name" value="FAD_binding_4"/>
    <property type="match status" value="1"/>
</dbReference>
<dbReference type="Pfam" id="PF02873">
    <property type="entry name" value="MurB_C"/>
    <property type="match status" value="1"/>
</dbReference>
<dbReference type="SUPFAM" id="SSF56176">
    <property type="entry name" value="FAD-binding/transporter-associated domain-like"/>
    <property type="match status" value="1"/>
</dbReference>
<dbReference type="SUPFAM" id="SSF56194">
    <property type="entry name" value="Uridine diphospho-N-Acetylenolpyruvylglucosamine reductase, MurB, C-terminal domain"/>
    <property type="match status" value="1"/>
</dbReference>
<dbReference type="PROSITE" id="PS51387">
    <property type="entry name" value="FAD_PCMH"/>
    <property type="match status" value="1"/>
</dbReference>
<reference key="1">
    <citation type="journal article" date="2008" name="BMC Genomics">
        <title>Complete genome of Phenylobacterium zucineum - a novel facultative intracellular bacterium isolated from human erythroleukemia cell line K562.</title>
        <authorList>
            <person name="Luo Y."/>
            <person name="Xu X."/>
            <person name="Ding Z."/>
            <person name="Liu Z."/>
            <person name="Zhang B."/>
            <person name="Yan Z."/>
            <person name="Sun J."/>
            <person name="Hu S."/>
            <person name="Hu X."/>
        </authorList>
    </citation>
    <scope>NUCLEOTIDE SEQUENCE [LARGE SCALE GENOMIC DNA]</scope>
    <source>
        <strain>HLK1</strain>
    </source>
</reference>